<dbReference type="SMR" id="P0DQR1"/>
<dbReference type="GO" id="GO:0005615">
    <property type="term" value="C:extracellular space"/>
    <property type="evidence" value="ECO:0007669"/>
    <property type="project" value="TreeGrafter"/>
</dbReference>
<dbReference type="GO" id="GO:0042151">
    <property type="term" value="C:nematocyst"/>
    <property type="evidence" value="ECO:0007669"/>
    <property type="project" value="UniProtKB-SubCell"/>
</dbReference>
<dbReference type="GO" id="GO:0015459">
    <property type="term" value="F:potassium channel regulator activity"/>
    <property type="evidence" value="ECO:0007669"/>
    <property type="project" value="UniProtKB-KW"/>
</dbReference>
<dbReference type="GO" id="GO:0004867">
    <property type="term" value="F:serine-type endopeptidase inhibitor activity"/>
    <property type="evidence" value="ECO:0007669"/>
    <property type="project" value="UniProtKB-KW"/>
</dbReference>
<dbReference type="GO" id="GO:0090729">
    <property type="term" value="F:toxin activity"/>
    <property type="evidence" value="ECO:0007669"/>
    <property type="project" value="UniProtKB-KW"/>
</dbReference>
<dbReference type="CDD" id="cd00109">
    <property type="entry name" value="Kunitz-type"/>
    <property type="match status" value="1"/>
</dbReference>
<dbReference type="FunFam" id="4.10.410.10:FF:000021">
    <property type="entry name" value="Serine protease inhibitor, putative"/>
    <property type="match status" value="1"/>
</dbReference>
<dbReference type="Gene3D" id="4.10.410.10">
    <property type="entry name" value="Pancreatic trypsin inhibitor Kunitz domain"/>
    <property type="match status" value="1"/>
</dbReference>
<dbReference type="InterPro" id="IPR002223">
    <property type="entry name" value="Kunitz_BPTI"/>
</dbReference>
<dbReference type="InterPro" id="IPR036880">
    <property type="entry name" value="Kunitz_BPTI_sf"/>
</dbReference>
<dbReference type="InterPro" id="IPR020901">
    <property type="entry name" value="Prtase_inh_Kunz-CS"/>
</dbReference>
<dbReference type="InterPro" id="IPR050098">
    <property type="entry name" value="TFPI/VKTCI-like"/>
</dbReference>
<dbReference type="PANTHER" id="PTHR10083:SF374">
    <property type="entry name" value="BPTI_KUNITZ INHIBITOR DOMAIN-CONTAINING PROTEIN"/>
    <property type="match status" value="1"/>
</dbReference>
<dbReference type="PANTHER" id="PTHR10083">
    <property type="entry name" value="KUNITZ-TYPE PROTEASE INHIBITOR-RELATED"/>
    <property type="match status" value="1"/>
</dbReference>
<dbReference type="Pfam" id="PF00014">
    <property type="entry name" value="Kunitz_BPTI"/>
    <property type="match status" value="1"/>
</dbReference>
<dbReference type="PRINTS" id="PR00759">
    <property type="entry name" value="BASICPTASE"/>
</dbReference>
<dbReference type="SMART" id="SM00131">
    <property type="entry name" value="KU"/>
    <property type="match status" value="1"/>
</dbReference>
<dbReference type="SUPFAM" id="SSF57362">
    <property type="entry name" value="BPTI-like"/>
    <property type="match status" value="1"/>
</dbReference>
<dbReference type="PROSITE" id="PS00280">
    <property type="entry name" value="BPTI_KUNITZ_1"/>
    <property type="match status" value="1"/>
</dbReference>
<dbReference type="PROSITE" id="PS50279">
    <property type="entry name" value="BPTI_KUNITZ_2"/>
    <property type="match status" value="1"/>
</dbReference>
<evidence type="ECO:0000255" key="1">
    <source>
        <dbReference type="PROSITE-ProRule" id="PRU00031"/>
    </source>
</evidence>
<evidence type="ECO:0000269" key="2">
    <source>
    </source>
</evidence>
<evidence type="ECO:0000303" key="3">
    <source>
    </source>
</evidence>
<evidence type="ECO:0000305" key="4"/>
<evidence type="ECO:0000305" key="5">
    <source>
    </source>
</evidence>
<protein>
    <recommendedName>
        <fullName evidence="3">Kunitz-like toxin PcKuz3</fullName>
    </recommendedName>
    <alternativeName>
        <fullName evidence="5">Kunitz-type serine protease inhibitor PcKuz3</fullName>
    </alternativeName>
    <alternativeName>
        <fullName evidence="4">PI-sphenopitoxin-Pc1c</fullName>
        <shortName evidence="4">PI-SPTX-Pc1c</shortName>
    </alternativeName>
</protein>
<reference key="1">
    <citation type="journal article" date="2018" name="J. Proteome Res.">
        <title>Novel kunitz-like peptides discovered in the zoanthid Palythoa caribaeorum through transcriptome sequencing.</title>
        <authorList>
            <person name="Liao Q."/>
            <person name="Li S."/>
            <person name="Siu S.W.I."/>
            <person name="Yang B."/>
            <person name="Huang C."/>
            <person name="Chan J.Y."/>
            <person name="Morlighem J.R.L."/>
            <person name="Wong C.T.T."/>
            <person name="Radis-Baptista G."/>
            <person name="Lee S.M."/>
        </authorList>
    </citation>
    <scope>NUCLEOTIDE SEQUENCE [MRNA]</scope>
    <scope>FUNCTION</scope>
    <scope>SYNTHESIS</scope>
    <scope>TOXIC DOSE</scope>
    <scope>3D-STRUCTURE MODELING</scope>
</reference>
<organism>
    <name type="scientific">Palythoa caribaeorum</name>
    <name type="common">White encrusting zoanthid coral</name>
    <dbReference type="NCBI Taxonomy" id="134933"/>
    <lineage>
        <taxon>Eukaryota</taxon>
        <taxon>Metazoa</taxon>
        <taxon>Cnidaria</taxon>
        <taxon>Anthozoa</taxon>
        <taxon>Hexacorallia</taxon>
        <taxon>Zoantharia</taxon>
        <taxon>Sphenopidae</taxon>
        <taxon>Palythoa</taxon>
    </lineage>
</organism>
<keyword id="KW-1015">Disulfide bond</keyword>
<keyword id="KW-0872">Ion channel impairing toxin</keyword>
<keyword id="KW-0166">Nematocyst</keyword>
<keyword id="KW-0528">Neurotoxin</keyword>
<keyword id="KW-0632">Potassium channel impairing toxin</keyword>
<keyword id="KW-0646">Protease inhibitor</keyword>
<keyword id="KW-0964">Secreted</keyword>
<keyword id="KW-0722">Serine protease inhibitor</keyword>
<keyword id="KW-0800">Toxin</keyword>
<keyword id="KW-1220">Voltage-gated potassium channel impairing toxin</keyword>
<feature type="chain" id="PRO_0000453751" description="Kunitz-like toxin PcKuz3" evidence="5">
    <location>
        <begin position="1"/>
        <end position="51"/>
    </location>
</feature>
<feature type="disulfide bond" evidence="1">
    <location>
        <begin position="1"/>
        <end position="51"/>
    </location>
</feature>
<feature type="disulfide bond" evidence="1">
    <location>
        <begin position="10"/>
        <end position="34"/>
    </location>
</feature>
<feature type="disulfide bond" evidence="1">
    <location>
        <begin position="26"/>
        <end position="47"/>
    </location>
</feature>
<accession>P0DQR1</accession>
<proteinExistence type="inferred from homology"/>
<comment type="function">
    <text evidence="2 5">Potent toxin and weak serine protease inhibitor that displays activity on both trypsin and elastase (PubMed:29285938). May act as a neurotoxin by blocking voltage-gated potassium channels (Kv1.1/KCNA1 and Kv1.2/KCNA2) (Probable). Has a neuroprotective effect, since it suppress, at low concentration, the 6-hydroxydopamine-induced neurotoxicity on the locomotive behavior of zebrafish (PubMed:29285938). In vivo, has strong reversible antilocomotor activity (PubMed:29285938). In addition, it is lethal to zebrafish larvae at high doses (PubMed:29285938).</text>
</comment>
<comment type="subcellular location">
    <subcellularLocation>
        <location evidence="4">Secreted</location>
    </subcellularLocation>
    <subcellularLocation>
        <location evidence="4">Nematocyst</location>
    </subcellularLocation>
</comment>
<comment type="toxic dose">
    <text evidence="2">LD(50) is 10-20 uM against zebrafish larvae.</text>
</comment>
<comment type="similarity">
    <text evidence="4">Belongs to the venom Kunitz-type family. Sea anemone type 2 potassium channel toxin subfamily.</text>
</comment>
<sequence>CQQPVKPGLCEAYIPRFFYNTSSKQCEKFIYGGCGGNSNRFLTMKACQDKC</sequence>
<name>VKT3_PALCA</name>